<accession>Q2M021</accession>
<reference key="1">
    <citation type="journal article" date="2005" name="Genome Res.">
        <title>Comparative genome sequencing of Drosophila pseudoobscura: chromosomal, gene, and cis-element evolution.</title>
        <authorList>
            <person name="Richards S."/>
            <person name="Liu Y."/>
            <person name="Bettencourt B.R."/>
            <person name="Hradecky P."/>
            <person name="Letovsky S."/>
            <person name="Nielsen R."/>
            <person name="Thornton K."/>
            <person name="Hubisz M.J."/>
            <person name="Chen R."/>
            <person name="Meisel R.P."/>
            <person name="Couronne O."/>
            <person name="Hua S."/>
            <person name="Smith M.A."/>
            <person name="Zhang P."/>
            <person name="Liu J."/>
            <person name="Bussemaker H.J."/>
            <person name="van Batenburg M.F."/>
            <person name="Howells S.L."/>
            <person name="Scherer S.E."/>
            <person name="Sodergren E."/>
            <person name="Matthews B.B."/>
            <person name="Crosby M.A."/>
            <person name="Schroeder A.J."/>
            <person name="Ortiz-Barrientos D."/>
            <person name="Rives C.M."/>
            <person name="Metzker M.L."/>
            <person name="Muzny D.M."/>
            <person name="Scott G."/>
            <person name="Steffen D."/>
            <person name="Wheeler D.A."/>
            <person name="Worley K.C."/>
            <person name="Havlak P."/>
            <person name="Durbin K.J."/>
            <person name="Egan A."/>
            <person name="Gill R."/>
            <person name="Hume J."/>
            <person name="Morgan M.B."/>
            <person name="Miner G."/>
            <person name="Hamilton C."/>
            <person name="Huang Y."/>
            <person name="Waldron L."/>
            <person name="Verduzco D."/>
            <person name="Clerc-Blankenburg K.P."/>
            <person name="Dubchak I."/>
            <person name="Noor M.A.F."/>
            <person name="Anderson W."/>
            <person name="White K.P."/>
            <person name="Clark A.G."/>
            <person name="Schaeffer S.W."/>
            <person name="Gelbart W.M."/>
            <person name="Weinstock G.M."/>
            <person name="Gibbs R.A."/>
        </authorList>
    </citation>
    <scope>NUCLEOTIDE SEQUENCE [LARGE SCALE GENOMIC DNA]</scope>
    <source>
        <strain>MV2-25 / Tucson 14011-0121.94</strain>
    </source>
</reference>
<comment type="similarity">
    <text evidence="1">Belongs to the TTC36 family.</text>
</comment>
<sequence>MPQVNLKLSSHDRQVLESIFNPLELSSTQPSVSVPCESELADVEPDTEAVRSSRELELQGVLLTEKGSFDEALKVFQLALNQAQRASVLNNRAQTLRLAKRDGEALDDLNKALEMASDQQSRTKCHAHCQRGVLYRKLDNLDAARSDFEAAAQLGSKFAREQLVEINPFAALCNQMLRKAFDQLQ</sequence>
<proteinExistence type="inferred from homology"/>
<feature type="chain" id="PRO_0000332188" description="Tetratricopeptide repeat protein 36 homolog">
    <location>
        <begin position="1"/>
        <end position="185"/>
    </location>
</feature>
<feature type="repeat" description="TPR 1">
    <location>
        <begin position="53"/>
        <end position="86"/>
    </location>
</feature>
<feature type="repeat" description="TPR 2">
    <location>
        <begin position="88"/>
        <end position="119"/>
    </location>
</feature>
<feature type="repeat" description="TPR 3">
    <location>
        <begin position="125"/>
        <end position="158"/>
    </location>
</feature>
<dbReference type="EMBL" id="CH379069">
    <property type="protein sequence ID" value="EAL31115.1"/>
    <property type="molecule type" value="Genomic_DNA"/>
</dbReference>
<dbReference type="RefSeq" id="XP_001353602.1">
    <property type="nucleotide sequence ID" value="XM_001353566.3"/>
</dbReference>
<dbReference type="SMR" id="Q2M021"/>
<dbReference type="FunCoup" id="Q2M021">
    <property type="interactions" value="16"/>
</dbReference>
<dbReference type="STRING" id="46245.Q2M021"/>
<dbReference type="EnsemblMetazoa" id="FBtr0275974">
    <property type="protein sequence ID" value="FBpp0274412"/>
    <property type="gene ID" value="FBgn0072808"/>
</dbReference>
<dbReference type="KEGG" id="dpo:4813544"/>
<dbReference type="eggNOG" id="KOG4555">
    <property type="taxonomic scope" value="Eukaryota"/>
</dbReference>
<dbReference type="HOGENOM" id="CLU_1464567_0_0_1"/>
<dbReference type="InParanoid" id="Q2M021"/>
<dbReference type="OMA" id="CNQMLCE"/>
<dbReference type="PhylomeDB" id="Q2M021"/>
<dbReference type="Proteomes" id="UP000001819">
    <property type="component" value="Chromosome X"/>
</dbReference>
<dbReference type="Bgee" id="FBgn0072808">
    <property type="expression patterns" value="Expressed in insect adult head"/>
</dbReference>
<dbReference type="GO" id="GO:0006570">
    <property type="term" value="P:tyrosine metabolic process"/>
    <property type="evidence" value="ECO:0007669"/>
    <property type="project" value="TreeGrafter"/>
</dbReference>
<dbReference type="Gene3D" id="1.25.40.10">
    <property type="entry name" value="Tetratricopeptide repeat domain"/>
    <property type="match status" value="1"/>
</dbReference>
<dbReference type="InterPro" id="IPR011990">
    <property type="entry name" value="TPR-like_helical_dom_sf"/>
</dbReference>
<dbReference type="InterPro" id="IPR019734">
    <property type="entry name" value="TPR_rpt"/>
</dbReference>
<dbReference type="InterPro" id="IPR038906">
    <property type="entry name" value="TTC36"/>
</dbReference>
<dbReference type="PANTHER" id="PTHR21405">
    <property type="entry name" value="CDNA SEQUENCE BC021608"/>
    <property type="match status" value="1"/>
</dbReference>
<dbReference type="PANTHER" id="PTHR21405:SF0">
    <property type="entry name" value="TETRATRICOPEPTIDE REPEAT PROTEIN 36"/>
    <property type="match status" value="1"/>
</dbReference>
<dbReference type="Pfam" id="PF13181">
    <property type="entry name" value="TPR_8"/>
    <property type="match status" value="1"/>
</dbReference>
<dbReference type="SMART" id="SM00028">
    <property type="entry name" value="TPR"/>
    <property type="match status" value="2"/>
</dbReference>
<dbReference type="SUPFAM" id="SSF48452">
    <property type="entry name" value="TPR-like"/>
    <property type="match status" value="1"/>
</dbReference>
<dbReference type="PROSITE" id="PS50293">
    <property type="entry name" value="TPR_REGION"/>
    <property type="match status" value="2"/>
</dbReference>
<gene>
    <name type="ORF">GA12762</name>
</gene>
<organism>
    <name type="scientific">Drosophila pseudoobscura pseudoobscura</name>
    <name type="common">Fruit fly</name>
    <dbReference type="NCBI Taxonomy" id="46245"/>
    <lineage>
        <taxon>Eukaryota</taxon>
        <taxon>Metazoa</taxon>
        <taxon>Ecdysozoa</taxon>
        <taxon>Arthropoda</taxon>
        <taxon>Hexapoda</taxon>
        <taxon>Insecta</taxon>
        <taxon>Pterygota</taxon>
        <taxon>Neoptera</taxon>
        <taxon>Endopterygota</taxon>
        <taxon>Diptera</taxon>
        <taxon>Brachycera</taxon>
        <taxon>Muscomorpha</taxon>
        <taxon>Ephydroidea</taxon>
        <taxon>Drosophilidae</taxon>
        <taxon>Drosophila</taxon>
        <taxon>Sophophora</taxon>
    </lineage>
</organism>
<keyword id="KW-1185">Reference proteome</keyword>
<keyword id="KW-0677">Repeat</keyword>
<keyword id="KW-0802">TPR repeat</keyword>
<protein>
    <recommendedName>
        <fullName>Tetratricopeptide repeat protein 36 homolog</fullName>
        <shortName>TPR repeat protein 36 homolog</shortName>
    </recommendedName>
</protein>
<name>TTC36_DROPS</name>
<evidence type="ECO:0000305" key="1"/>